<evidence type="ECO:0000250" key="1"/>
<evidence type="ECO:0000255" key="2"/>
<evidence type="ECO:0000305" key="3"/>
<name>MNHA2_STAA3</name>
<accession>Q2FJ15</accession>
<feature type="chain" id="PRO_0000372297" description="Putative antiporter subunit mnhA2">
    <location>
        <begin position="1"/>
        <end position="800"/>
    </location>
</feature>
<feature type="transmembrane region" description="Helical" evidence="2">
    <location>
        <begin position="1"/>
        <end position="21"/>
    </location>
</feature>
<feature type="transmembrane region" description="Helical" evidence="2">
    <location>
        <begin position="33"/>
        <end position="53"/>
    </location>
</feature>
<feature type="transmembrane region" description="Helical" evidence="2">
    <location>
        <begin position="78"/>
        <end position="98"/>
    </location>
</feature>
<feature type="transmembrane region" description="Helical" evidence="2">
    <location>
        <begin position="118"/>
        <end position="138"/>
    </location>
</feature>
<feature type="transmembrane region" description="Helical" evidence="2">
    <location>
        <begin position="167"/>
        <end position="187"/>
    </location>
</feature>
<feature type="transmembrane region" description="Helical" evidence="2">
    <location>
        <begin position="207"/>
        <end position="227"/>
    </location>
</feature>
<feature type="transmembrane region" description="Helical" evidence="2">
    <location>
        <begin position="241"/>
        <end position="261"/>
    </location>
</feature>
<feature type="transmembrane region" description="Helical" evidence="2">
    <location>
        <begin position="273"/>
        <end position="293"/>
    </location>
</feature>
<feature type="transmembrane region" description="Helical" evidence="2">
    <location>
        <begin position="300"/>
        <end position="320"/>
    </location>
</feature>
<feature type="transmembrane region" description="Helical" evidence="2">
    <location>
        <begin position="331"/>
        <end position="351"/>
    </location>
</feature>
<feature type="transmembrane region" description="Helical" evidence="2">
    <location>
        <begin position="387"/>
        <end position="407"/>
    </location>
</feature>
<feature type="transmembrane region" description="Helical" evidence="2">
    <location>
        <begin position="424"/>
        <end position="444"/>
    </location>
</feature>
<feature type="transmembrane region" description="Helical" evidence="2">
    <location>
        <begin position="472"/>
        <end position="492"/>
    </location>
</feature>
<feature type="transmembrane region" description="Helical" evidence="2">
    <location>
        <begin position="527"/>
        <end position="547"/>
    </location>
</feature>
<feature type="transmembrane region" description="Helical" evidence="2">
    <location>
        <begin position="595"/>
        <end position="615"/>
    </location>
</feature>
<feature type="transmembrane region" description="Helical" evidence="2">
    <location>
        <begin position="627"/>
        <end position="647"/>
    </location>
</feature>
<feature type="transmembrane region" description="Helical" evidence="2">
    <location>
        <begin position="651"/>
        <end position="671"/>
    </location>
</feature>
<feature type="transmembrane region" description="Helical" evidence="2">
    <location>
        <begin position="676"/>
        <end position="696"/>
    </location>
</feature>
<feature type="transmembrane region" description="Helical" evidence="2">
    <location>
        <begin position="712"/>
        <end position="732"/>
    </location>
</feature>
<feature type="transmembrane region" description="Helical" evidence="2">
    <location>
        <begin position="768"/>
        <end position="788"/>
    </location>
</feature>
<dbReference type="EMBL" id="CP000255">
    <property type="protein sequence ID" value="ABD21208.1"/>
    <property type="molecule type" value="Genomic_DNA"/>
</dbReference>
<dbReference type="RefSeq" id="WP_000060776.1">
    <property type="nucleotide sequence ID" value="NZ_CP027476.1"/>
</dbReference>
<dbReference type="SMR" id="Q2FJ15"/>
<dbReference type="KEGG" id="saa:SAUSA300_0610"/>
<dbReference type="HOGENOM" id="CLU_007100_2_1_9"/>
<dbReference type="OMA" id="PDSMVAI"/>
<dbReference type="Proteomes" id="UP000001939">
    <property type="component" value="Chromosome"/>
</dbReference>
<dbReference type="GO" id="GO:0005886">
    <property type="term" value="C:plasma membrane"/>
    <property type="evidence" value="ECO:0007669"/>
    <property type="project" value="UniProtKB-SubCell"/>
</dbReference>
<dbReference type="GO" id="GO:0015297">
    <property type="term" value="F:antiporter activity"/>
    <property type="evidence" value="ECO:0007669"/>
    <property type="project" value="UniProtKB-KW"/>
</dbReference>
<dbReference type="GO" id="GO:0006811">
    <property type="term" value="P:monoatomic ion transport"/>
    <property type="evidence" value="ECO:0007669"/>
    <property type="project" value="UniProtKB-KW"/>
</dbReference>
<dbReference type="InterPro" id="IPR050616">
    <property type="entry name" value="CPA3_Na-H_Antiporter_A"/>
</dbReference>
<dbReference type="InterPro" id="IPR025383">
    <property type="entry name" value="MrpA_C/MbhD"/>
</dbReference>
<dbReference type="InterPro" id="IPR046806">
    <property type="entry name" value="MrpA_C/MbhE"/>
</dbReference>
<dbReference type="InterPro" id="IPR001750">
    <property type="entry name" value="ND/Mrp_TM"/>
</dbReference>
<dbReference type="InterPro" id="IPR001516">
    <property type="entry name" value="Proton_antipo_N"/>
</dbReference>
<dbReference type="NCBIfam" id="NF009286">
    <property type="entry name" value="PRK12646.1"/>
    <property type="match status" value="1"/>
</dbReference>
<dbReference type="PANTHER" id="PTHR43373">
    <property type="entry name" value="NA(+)/H(+) ANTIPORTER SUBUNIT"/>
    <property type="match status" value="1"/>
</dbReference>
<dbReference type="PANTHER" id="PTHR43373:SF1">
    <property type="entry name" value="NA(+)_H(+) ANTIPORTER SUBUNIT A"/>
    <property type="match status" value="1"/>
</dbReference>
<dbReference type="Pfam" id="PF13244">
    <property type="entry name" value="MbhD"/>
    <property type="match status" value="1"/>
</dbReference>
<dbReference type="Pfam" id="PF20501">
    <property type="entry name" value="MbhE"/>
    <property type="match status" value="1"/>
</dbReference>
<dbReference type="Pfam" id="PF00361">
    <property type="entry name" value="Proton_antipo_M"/>
    <property type="match status" value="1"/>
</dbReference>
<dbReference type="Pfam" id="PF00662">
    <property type="entry name" value="Proton_antipo_N"/>
    <property type="match status" value="1"/>
</dbReference>
<dbReference type="PRINTS" id="PR01434">
    <property type="entry name" value="NADHDHGNASE5"/>
</dbReference>
<protein>
    <recommendedName>
        <fullName>Putative antiporter subunit mnhA2</fullName>
    </recommendedName>
    <alternativeName>
        <fullName>Mrp complex subunit A2</fullName>
    </alternativeName>
    <alternativeName>
        <fullName>Putative NADH-ubiquinone oxidoreductase subunit mnhA2</fullName>
    </alternativeName>
</protein>
<comment type="subunit">
    <text evidence="1">May form a heterooligomeric complex that consists of seven subunits: mnhA2, mnhB2, mnhC2, mnhD2, mnhE2, mnhF2 and mnhG2.</text>
</comment>
<comment type="subcellular location">
    <subcellularLocation>
        <location evidence="3">Cell membrane</location>
        <topology evidence="3">Multi-pass membrane protein</topology>
    </subcellularLocation>
</comment>
<comment type="similarity">
    <text evidence="3">Belongs to the CPA3 antiporters (TC 2.A.63) subunit A family.</text>
</comment>
<gene>
    <name type="primary">mnhA2</name>
    <name type="synonym">mrpA2</name>
    <name type="ordered locus">SAUSA300_0610</name>
</gene>
<reference key="1">
    <citation type="journal article" date="2006" name="Lancet">
        <title>Complete genome sequence of USA300, an epidemic clone of community-acquired meticillin-resistant Staphylococcus aureus.</title>
        <authorList>
            <person name="Diep B.A."/>
            <person name="Gill S.R."/>
            <person name="Chang R.F."/>
            <person name="Phan T.H."/>
            <person name="Chen J.H."/>
            <person name="Davidson M.G."/>
            <person name="Lin F."/>
            <person name="Lin J."/>
            <person name="Carleton H.A."/>
            <person name="Mongodin E.F."/>
            <person name="Sensabaugh G.F."/>
            <person name="Perdreau-Remington F."/>
        </authorList>
    </citation>
    <scope>NUCLEOTIDE SEQUENCE [LARGE SCALE GENOMIC DNA]</scope>
    <source>
        <strain>USA300</strain>
    </source>
</reference>
<sequence>MSLVYLLIAILVIMAMILLMSKRRALAKYAGYIALVAPVISSIYFLIQIPSVAKLQYLSTSIPWIKTLDINLDLRLDGLSLMFSLIISLIGIAVFFYATQYLSSRKDNLPRFYFYLTLFMFSMIGIVLSDNTILMYIFWELTSVSSFLLISYWYNNGDSQFGAIQSFMITVFGGLALLVGFIMLYIMTGTNNITEILGQADHIKNHGLFIPMIFMFLLGAFTKSAQFPFHIWLPRAMAAPTPVSAYLHSATMVKAGIFLLLRFTPLLGLSNMYVYIVTFVGLITMLFGSITALKQWDLKGILAYSTISQLGMIMAMVGIGGGYAQHQQDAIASIYVFVLFGALFHLMNHAIFKCALFMGVGILDHEAGSRDIRILSGMRQLFPKMNLVMTIAALSMAGVPFLNGFLSKEMFLDALTQTGQLSQFSLISMIAIVFVGVIASVFTFTYALYMVKEVFWTKYDSKVFTKKNIHEPWLFSLPSLILMVLVPVIFFVPNIFGKGIIVLALRAVSGGNHQIDQLAPHVSQWHGFNIPLLLTIIIILLGSVLAIKVDWKKVFTGKIRQISVSKSYEMVYRHFEKFATKRFKRVMQDRLNQYIIMTLGIFMIIIGYGYIRIGLPKVHQLHVSEFGALEIILAIVTVTIGISLIFIRQRLTMVILNGVIGFVVTLFFIAMKAPDLALTQLVVETITTILFIVSFSRLPNVPRSNANKKREIIKISVSLLMALIVVSLIFITQQTDGLSSISDFYLKADKLTGGKNIVNAILGDFRALDTLFEGLVLIITGLGIYTLLNYQDRRGQDERE</sequence>
<keyword id="KW-0050">Antiport</keyword>
<keyword id="KW-1003">Cell membrane</keyword>
<keyword id="KW-0406">Ion transport</keyword>
<keyword id="KW-0472">Membrane</keyword>
<keyword id="KW-0812">Transmembrane</keyword>
<keyword id="KW-1133">Transmembrane helix</keyword>
<keyword id="KW-0813">Transport</keyword>
<proteinExistence type="inferred from homology"/>
<organism>
    <name type="scientific">Staphylococcus aureus (strain USA300)</name>
    <dbReference type="NCBI Taxonomy" id="367830"/>
    <lineage>
        <taxon>Bacteria</taxon>
        <taxon>Bacillati</taxon>
        <taxon>Bacillota</taxon>
        <taxon>Bacilli</taxon>
        <taxon>Bacillales</taxon>
        <taxon>Staphylococcaceae</taxon>
        <taxon>Staphylococcus</taxon>
    </lineage>
</organism>